<keyword id="KW-0349">Heme</keyword>
<keyword id="KW-0408">Iron</keyword>
<keyword id="KW-0472">Membrane</keyword>
<keyword id="KW-0479">Metal-binding</keyword>
<keyword id="KW-0503">Monooxygenase</keyword>
<keyword id="KW-0560">Oxidoreductase</keyword>
<keyword id="KW-1185">Reference proteome</keyword>
<keyword id="KW-0812">Transmembrane</keyword>
<keyword id="KW-1133">Transmembrane helix</keyword>
<protein>
    <recommendedName>
        <fullName>Cytochrome P450 84A4</fullName>
        <ecNumber>1.14.-.-</ecNumber>
    </recommendedName>
</protein>
<gene>
    <name type="primary">CYP84A4</name>
    <name type="ordered locus">At5g04330</name>
    <name type="ORF">T19N18.60</name>
</gene>
<evidence type="ECO:0000250" key="1"/>
<evidence type="ECO:0000255" key="2"/>
<evidence type="ECO:0000269" key="3">
    <source>
    </source>
</evidence>
<evidence type="ECO:0000305" key="4"/>
<evidence type="ECO:0000305" key="5">
    <source>
    </source>
</evidence>
<sequence>MLTLMTLIVLVPLLLFLFPHLLLRRQMLLKPYPPGPKGLPVIGNILMMNQFNHRGLAKLSRIYGGLLHLRLGFSHIFVVSSPDIARQVLQVQDHVFSNRPTTIAIRYLTYGGSDLAFCNYGPFWRRMRKLYVMMLFSRKRAESWVSVDEEVHKSVRLVASNVGKPLNICKLAFSLSRDITFRAAFGSSSSTSDESRLDEFLEIIQEFSKLFGEFNVADYVPSWLSWIDPQGINGRVEKARKSLDGFIESVIDDHLHKKKREHDNVDEETDMVDQLLAFYEEEVKVNNSVTKINLDNIKGIIMDVMFGGTETVALAIEWVLTEILRSPENMKRVQDELTSVVGLDRWRVEDTHLEKLTFLKCILKETLRLHPPFPLLLHETVKDTEISGYFIPKGSRVMVNTYALGRDPNSWSDPESFNPGRFLNPIAPDLKGNNFEFVPFGSGRRSCPGMQLGLYAFELAVAHLLHCFTWSLPDGMNPGDVDTVEGPGLTVPKAIPLVAVPTTRLLCPIVVS</sequence>
<proteinExistence type="evidence at protein level"/>
<accession>F4JW83</accession>
<accession>Q9LKP9</accession>
<dbReference type="EC" id="1.14.-.-"/>
<dbReference type="EMBL" id="CP002688">
    <property type="protein sequence ID" value="AED90728.1"/>
    <property type="molecule type" value="Genomic_DNA"/>
</dbReference>
<dbReference type="EMBL" id="AF267140">
    <property type="protein sequence ID" value="AAF78943.1"/>
    <property type="molecule type" value="Genomic_DNA"/>
</dbReference>
<dbReference type="RefSeq" id="NP_196053.2">
    <property type="nucleotide sequence ID" value="NM_120515.3"/>
</dbReference>
<dbReference type="SMR" id="F4JW83"/>
<dbReference type="FunCoup" id="F4JW83">
    <property type="interactions" value="422"/>
</dbReference>
<dbReference type="STRING" id="3702.F4JW83"/>
<dbReference type="PaxDb" id="3702-AT5G04330.1"/>
<dbReference type="ProteomicsDB" id="240238"/>
<dbReference type="EnsemblPlants" id="AT5G04330.1">
    <property type="protein sequence ID" value="AT5G04330.1"/>
    <property type="gene ID" value="AT5G04330"/>
</dbReference>
<dbReference type="GeneID" id="830312"/>
<dbReference type="Gramene" id="AT5G04330.1">
    <property type="protein sequence ID" value="AT5G04330.1"/>
    <property type="gene ID" value="AT5G04330"/>
</dbReference>
<dbReference type="KEGG" id="ath:AT5G04330"/>
<dbReference type="Araport" id="AT5G04330"/>
<dbReference type="TAIR" id="AT5G04330">
    <property type="gene designation" value="CYP84A4"/>
</dbReference>
<dbReference type="eggNOG" id="KOG0156">
    <property type="taxonomic scope" value="Eukaryota"/>
</dbReference>
<dbReference type="HOGENOM" id="CLU_001570_4_0_1"/>
<dbReference type="InParanoid" id="F4JW83"/>
<dbReference type="OMA" id="FRMEETI"/>
<dbReference type="OrthoDB" id="1055148at2759"/>
<dbReference type="BioCyc" id="MetaCyc:MONOMER-19383"/>
<dbReference type="SABIO-RK" id="F4JW83"/>
<dbReference type="PRO" id="PR:F4JW83"/>
<dbReference type="Proteomes" id="UP000006548">
    <property type="component" value="Chromosome 5"/>
</dbReference>
<dbReference type="ExpressionAtlas" id="F4JW83">
    <property type="expression patterns" value="baseline and differential"/>
</dbReference>
<dbReference type="GO" id="GO:0016020">
    <property type="term" value="C:membrane"/>
    <property type="evidence" value="ECO:0007669"/>
    <property type="project" value="UniProtKB-SubCell"/>
</dbReference>
<dbReference type="GO" id="GO:0020037">
    <property type="term" value="F:heme binding"/>
    <property type="evidence" value="ECO:0007669"/>
    <property type="project" value="InterPro"/>
</dbReference>
<dbReference type="GO" id="GO:0005506">
    <property type="term" value="F:iron ion binding"/>
    <property type="evidence" value="ECO:0007669"/>
    <property type="project" value="InterPro"/>
</dbReference>
<dbReference type="GO" id="GO:0004497">
    <property type="term" value="F:monooxygenase activity"/>
    <property type="evidence" value="ECO:0000314"/>
    <property type="project" value="UniProtKB"/>
</dbReference>
<dbReference type="GO" id="GO:0016705">
    <property type="term" value="F:oxidoreductase activity, acting on paired donors, with incorporation or reduction of molecular oxygen"/>
    <property type="evidence" value="ECO:0007669"/>
    <property type="project" value="InterPro"/>
</dbReference>
<dbReference type="CDD" id="cd11072">
    <property type="entry name" value="CYP71-like"/>
    <property type="match status" value="1"/>
</dbReference>
<dbReference type="FunFam" id="1.10.630.10:FF:000054">
    <property type="entry name" value="Cytochrome P450 84A1"/>
    <property type="match status" value="1"/>
</dbReference>
<dbReference type="Gene3D" id="1.10.630.10">
    <property type="entry name" value="Cytochrome P450"/>
    <property type="match status" value="1"/>
</dbReference>
<dbReference type="InterPro" id="IPR053062">
    <property type="entry name" value="CYP450_84A"/>
</dbReference>
<dbReference type="InterPro" id="IPR001128">
    <property type="entry name" value="Cyt_P450"/>
</dbReference>
<dbReference type="InterPro" id="IPR017972">
    <property type="entry name" value="Cyt_P450_CS"/>
</dbReference>
<dbReference type="InterPro" id="IPR002401">
    <property type="entry name" value="Cyt_P450_E_grp-I"/>
</dbReference>
<dbReference type="InterPro" id="IPR036396">
    <property type="entry name" value="Cyt_P450_sf"/>
</dbReference>
<dbReference type="PANTHER" id="PTHR47945">
    <property type="entry name" value="CYTOCHROME P450 84A1-RELATED"/>
    <property type="match status" value="1"/>
</dbReference>
<dbReference type="PANTHER" id="PTHR47945:SF5">
    <property type="entry name" value="CYTOCHROME P450 84A1-RELATED"/>
    <property type="match status" value="1"/>
</dbReference>
<dbReference type="Pfam" id="PF00067">
    <property type="entry name" value="p450"/>
    <property type="match status" value="1"/>
</dbReference>
<dbReference type="PRINTS" id="PR00463">
    <property type="entry name" value="EP450I"/>
</dbReference>
<dbReference type="PRINTS" id="PR00385">
    <property type="entry name" value="P450"/>
</dbReference>
<dbReference type="SUPFAM" id="SSF48264">
    <property type="entry name" value="Cytochrome P450"/>
    <property type="match status" value="1"/>
</dbReference>
<dbReference type="PROSITE" id="PS00086">
    <property type="entry name" value="CYTOCHROME_P450"/>
    <property type="match status" value="1"/>
</dbReference>
<name>C84A4_ARATH</name>
<organism>
    <name type="scientific">Arabidopsis thaliana</name>
    <name type="common">Mouse-ear cress</name>
    <dbReference type="NCBI Taxonomy" id="3702"/>
    <lineage>
        <taxon>Eukaryota</taxon>
        <taxon>Viridiplantae</taxon>
        <taxon>Streptophyta</taxon>
        <taxon>Embryophyta</taxon>
        <taxon>Tracheophyta</taxon>
        <taxon>Spermatophyta</taxon>
        <taxon>Magnoliopsida</taxon>
        <taxon>eudicotyledons</taxon>
        <taxon>Gunneridae</taxon>
        <taxon>Pentapetalae</taxon>
        <taxon>rosids</taxon>
        <taxon>malvids</taxon>
        <taxon>Brassicales</taxon>
        <taxon>Brassicaceae</taxon>
        <taxon>Camelineae</taxon>
        <taxon>Arabidopsis</taxon>
    </lineage>
</organism>
<comment type="function">
    <text evidence="3">Cytochrome P450 involved in the production of catechol-substituted substrates needed for the arabidopyrones biosynthesis. Converts p-coumaraldehyde into caffealdehyde.</text>
</comment>
<comment type="cofactor">
    <cofactor evidence="1">
        <name>heme</name>
        <dbReference type="ChEBI" id="CHEBI:30413"/>
    </cofactor>
</comment>
<comment type="biophysicochemical properties">
    <kinetics>
        <KM evidence="3">41 uM for p-coumaraldehyde</KM>
        <Vmax evidence="3">0.69 pmol/sec/mg enzyme</Vmax>
    </kinetics>
</comment>
<comment type="subcellular location">
    <subcellularLocation>
        <location evidence="4">Membrane</location>
        <topology evidence="4">Single-pass membrane protein</topology>
    </subcellularLocation>
</comment>
<comment type="tissue specificity">
    <text evidence="3">Expressed in seedlings, roots, stems and inflorescence nodes. Low or no expression in leaves, flowers, seeds and lignifying tissue.</text>
</comment>
<comment type="disruption phenotype">
    <text evidence="3">Deficient in arabidopyrones, but normal amounts of sinapate esters.</text>
</comment>
<comment type="miscellaneous">
    <text evidence="5">Arabidopyrones are derived from phenylalanine instead of tyrosine like other ring-cleavage-derived plant metabolites.</text>
</comment>
<comment type="similarity">
    <text evidence="4">Belongs to the cytochrome P450 family.</text>
</comment>
<feature type="chain" id="PRO_0000424077" description="Cytochrome P450 84A4">
    <location>
        <begin position="1"/>
        <end position="512"/>
    </location>
</feature>
<feature type="transmembrane region" description="Helical" evidence="2">
    <location>
        <begin position="7"/>
        <end position="24"/>
    </location>
</feature>
<feature type="binding site" description="axial binding residue" evidence="1">
    <location>
        <position position="447"/>
    </location>
    <ligand>
        <name>heme</name>
        <dbReference type="ChEBI" id="CHEBI:30413"/>
    </ligand>
    <ligandPart>
        <name>Fe</name>
        <dbReference type="ChEBI" id="CHEBI:18248"/>
    </ligandPart>
</feature>
<reference key="1">
    <citation type="journal article" date="2000" name="Nature">
        <title>Sequence and analysis of chromosome 5 of the plant Arabidopsis thaliana.</title>
        <authorList>
            <person name="Tabata S."/>
            <person name="Kaneko T."/>
            <person name="Nakamura Y."/>
            <person name="Kotani H."/>
            <person name="Kato T."/>
            <person name="Asamizu E."/>
            <person name="Miyajima N."/>
            <person name="Sasamoto S."/>
            <person name="Kimura T."/>
            <person name="Hosouchi T."/>
            <person name="Kawashima K."/>
            <person name="Kohara M."/>
            <person name="Matsumoto M."/>
            <person name="Matsuno A."/>
            <person name="Muraki A."/>
            <person name="Nakayama S."/>
            <person name="Nakazaki N."/>
            <person name="Naruo K."/>
            <person name="Okumura S."/>
            <person name="Shinpo S."/>
            <person name="Takeuchi C."/>
            <person name="Wada T."/>
            <person name="Watanabe A."/>
            <person name="Yamada M."/>
            <person name="Yasuda M."/>
            <person name="Sato S."/>
            <person name="de la Bastide M."/>
            <person name="Huang E."/>
            <person name="Spiegel L."/>
            <person name="Gnoj L."/>
            <person name="O'Shaughnessy A."/>
            <person name="Preston R."/>
            <person name="Habermann K."/>
            <person name="Murray J."/>
            <person name="Johnson D."/>
            <person name="Rohlfing T."/>
            <person name="Nelson J."/>
            <person name="Stoneking T."/>
            <person name="Pepin K."/>
            <person name="Spieth J."/>
            <person name="Sekhon M."/>
            <person name="Armstrong J."/>
            <person name="Becker M."/>
            <person name="Belter E."/>
            <person name="Cordum H."/>
            <person name="Cordes M."/>
            <person name="Courtney L."/>
            <person name="Courtney W."/>
            <person name="Dante M."/>
            <person name="Du H."/>
            <person name="Edwards J."/>
            <person name="Fryman J."/>
            <person name="Haakensen B."/>
            <person name="Lamar E."/>
            <person name="Latreille P."/>
            <person name="Leonard S."/>
            <person name="Meyer R."/>
            <person name="Mulvaney E."/>
            <person name="Ozersky P."/>
            <person name="Riley A."/>
            <person name="Strowmatt C."/>
            <person name="Wagner-McPherson C."/>
            <person name="Wollam A."/>
            <person name="Yoakum M."/>
            <person name="Bell M."/>
            <person name="Dedhia N."/>
            <person name="Parnell L."/>
            <person name="Shah R."/>
            <person name="Rodriguez M."/>
            <person name="Hoon See L."/>
            <person name="Vil D."/>
            <person name="Baker J."/>
            <person name="Kirchoff K."/>
            <person name="Toth K."/>
            <person name="King L."/>
            <person name="Bahret A."/>
            <person name="Miller B."/>
            <person name="Marra M.A."/>
            <person name="Martienssen R."/>
            <person name="McCombie W.R."/>
            <person name="Wilson R.K."/>
            <person name="Murphy G."/>
            <person name="Bancroft I."/>
            <person name="Volckaert G."/>
            <person name="Wambutt R."/>
            <person name="Duesterhoeft A."/>
            <person name="Stiekema W."/>
            <person name="Pohl T."/>
            <person name="Entian K.-D."/>
            <person name="Terryn N."/>
            <person name="Hartley N."/>
            <person name="Bent E."/>
            <person name="Johnson S."/>
            <person name="Langham S.-A."/>
            <person name="McCullagh B."/>
            <person name="Robben J."/>
            <person name="Grymonprez B."/>
            <person name="Zimmermann W."/>
            <person name="Ramsperger U."/>
            <person name="Wedler H."/>
            <person name="Balke K."/>
            <person name="Wedler E."/>
            <person name="Peters S."/>
            <person name="van Staveren M."/>
            <person name="Dirkse W."/>
            <person name="Mooijman P."/>
            <person name="Klein Lankhorst R."/>
            <person name="Weitzenegger T."/>
            <person name="Bothe G."/>
            <person name="Rose M."/>
            <person name="Hauf J."/>
            <person name="Berneiser S."/>
            <person name="Hempel S."/>
            <person name="Feldpausch M."/>
            <person name="Lamberth S."/>
            <person name="Villarroel R."/>
            <person name="Gielen J."/>
            <person name="Ardiles W."/>
            <person name="Bents O."/>
            <person name="Lemcke K."/>
            <person name="Kolesov G."/>
            <person name="Mayer K.F.X."/>
            <person name="Rudd S."/>
            <person name="Schoof H."/>
            <person name="Schueller C."/>
            <person name="Zaccaria P."/>
            <person name="Mewes H.-W."/>
            <person name="Bevan M."/>
            <person name="Fransz P.F."/>
        </authorList>
    </citation>
    <scope>NUCLEOTIDE SEQUENCE [LARGE SCALE GENOMIC DNA]</scope>
    <source>
        <strain>cv. Columbia</strain>
    </source>
</reference>
<reference key="2">
    <citation type="journal article" date="2017" name="Plant J.">
        <title>Araport11: a complete reannotation of the Arabidopsis thaliana reference genome.</title>
        <authorList>
            <person name="Cheng C.Y."/>
            <person name="Krishnakumar V."/>
            <person name="Chan A.P."/>
            <person name="Thibaud-Nissen F."/>
            <person name="Schobel S."/>
            <person name="Town C.D."/>
        </authorList>
    </citation>
    <scope>GENOME REANNOTATION</scope>
    <source>
        <strain>cv. Columbia</strain>
    </source>
</reference>
<reference key="3">
    <citation type="submission" date="2000-05" db="EMBL/GenBank/DDBJ databases">
        <title>Arabidopsis thaliana (CYP84), partial genomic sequence.</title>
        <authorList>
            <person name="Rees J.D."/>
            <person name="Bolwell G.P."/>
        </authorList>
    </citation>
    <scope>NUCLEOTIDE SEQUENCE [GENOMIC DNA] OF 125-447</scope>
</reference>
<reference key="4">
    <citation type="journal article" date="2012" name="Science">
        <title>Assembly of an evolutionarily new pathway for alpha-pyrone biosynthesis in Arabidopsis.</title>
        <authorList>
            <person name="Weng J.K."/>
            <person name="Li Y."/>
            <person name="Mo H."/>
            <person name="Chapple C."/>
        </authorList>
    </citation>
    <scope>FUNCTION</scope>
    <scope>CATALYTIC ACTIVITY</scope>
    <scope>BIOPHYSICOCHEMICAL PROPERTIES</scope>
    <scope>DISRUPTION PHENOTYPE</scope>
    <scope>3D-STRUCTURE MODELING</scope>
    <scope>TISSUE SPECIFICITY</scope>
</reference>